<accession>Q47096</accession>
<feature type="signal peptide" evidence="2">
    <location>
        <begin position="1"/>
        <end position="31"/>
    </location>
</feature>
<feature type="chain" id="PRO_0000007858" description="Endoglucanase 5">
    <location>
        <begin position="32"/>
        <end position="505"/>
    </location>
</feature>
<feature type="domain" description="CBM3" evidence="3">
    <location>
        <begin position="353"/>
        <end position="505"/>
    </location>
</feature>
<feature type="region of interest" description="Catalytic">
    <location>
        <begin position="32"/>
        <end position="334"/>
    </location>
</feature>
<feature type="region of interest" description="Disordered" evidence="4">
    <location>
        <begin position="332"/>
        <end position="355"/>
    </location>
</feature>
<feature type="region of interest" description="Linker">
    <location>
        <begin position="335"/>
        <end position="352"/>
    </location>
</feature>
<feature type="compositionally biased region" description="Low complexity" evidence="4">
    <location>
        <begin position="339"/>
        <end position="355"/>
    </location>
</feature>
<feature type="active site" description="Proton donor" evidence="1">
    <location>
        <position position="168"/>
    </location>
</feature>
<feature type="active site" description="Nucleophile" evidence="1">
    <location>
        <position position="256"/>
    </location>
</feature>
<feature type="binding site" evidence="1">
    <location>
        <position position="64"/>
    </location>
    <ligand>
        <name>substrate</name>
    </ligand>
</feature>
<feature type="binding site" evidence="1">
    <location>
        <begin position="68"/>
        <end position="69"/>
    </location>
    <ligand>
        <name>substrate</name>
    </ligand>
</feature>
<feature type="binding site" evidence="1">
    <location>
        <position position="95"/>
    </location>
    <ligand>
        <name>substrate</name>
    </ligand>
</feature>
<feature type="binding site" evidence="1">
    <location>
        <position position="130"/>
    </location>
    <ligand>
        <name>substrate</name>
    </ligand>
</feature>
<feature type="binding site" evidence="1">
    <location>
        <position position="230"/>
    </location>
    <ligand>
        <name>substrate</name>
    </ligand>
</feature>
<feature type="binding site" evidence="1">
    <location>
        <begin position="262"/>
        <end position="263"/>
    </location>
    <ligand>
        <name>substrate</name>
    </ligand>
</feature>
<feature type="binding site" evidence="1">
    <location>
        <position position="290"/>
    </location>
    <ligand>
        <name>substrate</name>
    </ligand>
</feature>
<feature type="binding site" evidence="1">
    <location>
        <begin position="295"/>
        <end position="297"/>
    </location>
    <ligand>
        <name>substrate</name>
    </ligand>
</feature>
<keyword id="KW-0119">Carbohydrate metabolism</keyword>
<keyword id="KW-0136">Cellulose degradation</keyword>
<keyword id="KW-0326">Glycosidase</keyword>
<keyword id="KW-0378">Hydrolase</keyword>
<keyword id="KW-0624">Polysaccharide degradation</keyword>
<keyword id="KW-0964">Secreted</keyword>
<keyword id="KW-0732">Signal</keyword>
<evidence type="ECO:0000250" key="1">
    <source>
        <dbReference type="UniProtKB" id="O85465"/>
    </source>
</evidence>
<evidence type="ECO:0000255" key="2"/>
<evidence type="ECO:0000255" key="3">
    <source>
        <dbReference type="PROSITE-ProRule" id="PRU00513"/>
    </source>
</evidence>
<evidence type="ECO:0000256" key="4">
    <source>
        <dbReference type="SAM" id="MobiDB-lite"/>
    </source>
</evidence>
<evidence type="ECO:0000305" key="5"/>
<comment type="function">
    <text>Endoglucanase with some exoglucanase activity.</text>
</comment>
<comment type="catalytic activity">
    <reaction>
        <text>Endohydrolysis of (1-&gt;4)-beta-D-glucosidic linkages in cellulose, lichenin and cereal beta-D-glucans.</text>
        <dbReference type="EC" id="3.2.1.4"/>
    </reaction>
</comment>
<comment type="biophysicochemical properties">
    <phDependence>
        <text>Optimum pH is about 7.0.</text>
    </phDependence>
    <temperatureDependence>
        <text>Optimum temperature is about 42 degrees Celsius.</text>
    </temperatureDependence>
</comment>
<comment type="subcellular location">
    <subcellularLocation>
        <location>Secreted</location>
    </subcellularLocation>
</comment>
<comment type="similarity">
    <text evidence="5">Belongs to the glycosyl hydrolase 5 (cellulase A) family.</text>
</comment>
<gene>
    <name type="primary">celV</name>
</gene>
<reference key="1">
    <citation type="journal article" date="1993" name="Mol. Gen. Genet.">
        <title>Molecular analysis of the major cellulase (CelV) of Erwinia carotovora: evidence for an evolutionary 'mix-and-match' of enzyme domains.</title>
        <authorList>
            <person name="Cooper V.J.C."/>
            <person name="Salmond G.P.C."/>
        </authorList>
    </citation>
    <scope>NUCLEOTIDE SEQUENCE [GENOMIC DNA]</scope>
    <source>
        <strain>SCRI 193</strain>
    </source>
</reference>
<organism>
    <name type="scientific">Pectobacterium carotovorum subsp. carotovorum</name>
    <name type="common">Erwinia carotovora subsp. carotovora</name>
    <dbReference type="NCBI Taxonomy" id="555"/>
    <lineage>
        <taxon>Bacteria</taxon>
        <taxon>Pseudomonadati</taxon>
        <taxon>Pseudomonadota</taxon>
        <taxon>Gammaproteobacteria</taxon>
        <taxon>Enterobacterales</taxon>
        <taxon>Pectobacteriaceae</taxon>
        <taxon>Pectobacterium</taxon>
    </lineage>
</organism>
<sequence>MWMRRNQIVRKLTLGVVTTVLGMSLSFSALSATPVETHGQLSIENGRLVDEQGKRVQLRGISSHGLQWFGDYVNKDSMKWLRDDWGINVFRVAMYTAADGYISNPSLANKVKEAVAAAQSLGVYIIIDWHILSDNDPNIYKAQAKTFFAEMAGLYGSSPNVIYEIANEPNGGVTWNGQIRPYALEVTDTIRSKDPDNLIIVGTGTWSQDIHDAADNQLPDPNTMYALHFYAGTHGQFLRDRIDYAQSRGAAIFVSEWGTSDASGNGGPFLPESQTWIDFLNNRGVSWVNWSLTDKSEASAALAPGASKSGGWTEQNLSTSGKFVREQIRAGANLGGGDTPTTPTEPTNPGNGTTGDVVLQYRNVDNNPSDDAIRMAVNIKNTGSTPIKLSDLQVRYYFHDDGKPGANLFVDWANVGPNNIVTSTGTPAASTDKANRYVLVTFSSGAGSLQPGAETGEVQVRIHAGDWSNVNETNDYSYGANVTSYANWDKITVHDKGTLVWGVEP</sequence>
<dbReference type="EC" id="3.2.1.4"/>
<dbReference type="EMBL" id="X76000">
    <property type="protein sequence ID" value="CAA53592.1"/>
    <property type="molecule type" value="Genomic_DNA"/>
</dbReference>
<dbReference type="PIR" id="S39962">
    <property type="entry name" value="S39962"/>
</dbReference>
<dbReference type="SMR" id="Q47096"/>
<dbReference type="CAZy" id="CBM3">
    <property type="family name" value="Carbohydrate-Binding Module Family 3"/>
</dbReference>
<dbReference type="CAZy" id="GH5">
    <property type="family name" value="Glycoside Hydrolase Family 5"/>
</dbReference>
<dbReference type="GO" id="GO:0005576">
    <property type="term" value="C:extracellular region"/>
    <property type="evidence" value="ECO:0007669"/>
    <property type="project" value="UniProtKB-SubCell"/>
</dbReference>
<dbReference type="GO" id="GO:0008810">
    <property type="term" value="F:cellulase activity"/>
    <property type="evidence" value="ECO:0007669"/>
    <property type="project" value="UniProtKB-EC"/>
</dbReference>
<dbReference type="GO" id="GO:0030248">
    <property type="term" value="F:cellulose binding"/>
    <property type="evidence" value="ECO:0007669"/>
    <property type="project" value="InterPro"/>
</dbReference>
<dbReference type="GO" id="GO:0030245">
    <property type="term" value="P:cellulose catabolic process"/>
    <property type="evidence" value="ECO:0007669"/>
    <property type="project" value="UniProtKB-KW"/>
</dbReference>
<dbReference type="Gene3D" id="2.60.40.710">
    <property type="entry name" value="Endoglucanase-like"/>
    <property type="match status" value="1"/>
</dbReference>
<dbReference type="Gene3D" id="3.20.20.80">
    <property type="entry name" value="Glycosidases"/>
    <property type="match status" value="1"/>
</dbReference>
<dbReference type="InterPro" id="IPR008965">
    <property type="entry name" value="CBM2/CBM3_carb-bd_dom_sf"/>
</dbReference>
<dbReference type="InterPro" id="IPR001956">
    <property type="entry name" value="CBM3"/>
</dbReference>
<dbReference type="InterPro" id="IPR036966">
    <property type="entry name" value="CBM3_sf"/>
</dbReference>
<dbReference type="InterPro" id="IPR001547">
    <property type="entry name" value="Glyco_hydro_5"/>
</dbReference>
<dbReference type="InterPro" id="IPR018087">
    <property type="entry name" value="Glyco_hydro_5_CS"/>
</dbReference>
<dbReference type="InterPro" id="IPR017853">
    <property type="entry name" value="Glycoside_hydrolase_SF"/>
</dbReference>
<dbReference type="PANTHER" id="PTHR34142">
    <property type="entry name" value="ENDO-BETA-1,4-GLUCANASE A"/>
    <property type="match status" value="1"/>
</dbReference>
<dbReference type="PANTHER" id="PTHR34142:SF1">
    <property type="entry name" value="GLYCOSIDE HYDROLASE FAMILY 5 DOMAIN-CONTAINING PROTEIN"/>
    <property type="match status" value="1"/>
</dbReference>
<dbReference type="Pfam" id="PF00942">
    <property type="entry name" value="CBM_3"/>
    <property type="match status" value="1"/>
</dbReference>
<dbReference type="Pfam" id="PF00150">
    <property type="entry name" value="Cellulase"/>
    <property type="match status" value="1"/>
</dbReference>
<dbReference type="SMART" id="SM01067">
    <property type="entry name" value="CBM_3"/>
    <property type="match status" value="1"/>
</dbReference>
<dbReference type="SUPFAM" id="SSF51445">
    <property type="entry name" value="(Trans)glycosidases"/>
    <property type="match status" value="1"/>
</dbReference>
<dbReference type="SUPFAM" id="SSF49384">
    <property type="entry name" value="Carbohydrate-binding domain"/>
    <property type="match status" value="1"/>
</dbReference>
<dbReference type="PROSITE" id="PS51172">
    <property type="entry name" value="CBM3"/>
    <property type="match status" value="1"/>
</dbReference>
<dbReference type="PROSITE" id="PS00659">
    <property type="entry name" value="GLYCOSYL_HYDROL_F5"/>
    <property type="match status" value="1"/>
</dbReference>
<proteinExistence type="evidence at protein level"/>
<name>GUNV_PECCC</name>
<protein>
    <recommendedName>
        <fullName>Endoglucanase 5</fullName>
        <ecNumber>3.2.1.4</ecNumber>
    </recommendedName>
    <alternativeName>
        <fullName>Cellulase V</fullName>
    </alternativeName>
    <alternativeName>
        <fullName>Endo-1,4-beta-glucanase V</fullName>
    </alternativeName>
    <alternativeName>
        <fullName>Endoglucanase V</fullName>
    </alternativeName>
</protein>